<name>TCPA_AMBME</name>
<accession>P50157</accession>
<evidence type="ECO:0000250" key="1">
    <source>
        <dbReference type="UniProtKB" id="P17987"/>
    </source>
</evidence>
<evidence type="ECO:0000305" key="2"/>
<comment type="function">
    <text evidence="1">Component of the chaperonin-containing T-complex (TRiC), a molecular chaperone complex that assists the folding of proteins upon ATP hydrolysis.</text>
</comment>
<comment type="subunit">
    <text evidence="1">Component of the chaperonin-containing T-complex (TRiC), a heterooligomeric complex of about 850 to 900 kDa that forms two stacked rings, 12 to 16 nm in diameter.</text>
</comment>
<comment type="subcellular location">
    <subcellularLocation>
        <location evidence="1">Cytoplasm</location>
        <location evidence="1">Cytosol</location>
    </subcellularLocation>
</comment>
<comment type="similarity">
    <text evidence="2">Belongs to the TCP-1 chaperonin family.</text>
</comment>
<feature type="chain" id="PRO_0000128308" description="T-complex protein 1 subunit alpha">
    <location>
        <begin position="1" status="less than"/>
        <end position="173" status="greater than"/>
    </location>
</feature>
<feature type="non-terminal residue">
    <location>
        <position position="1"/>
    </location>
</feature>
<feature type="non-terminal residue">
    <location>
        <position position="173"/>
    </location>
</feature>
<keyword id="KW-0067">ATP-binding</keyword>
<keyword id="KW-0143">Chaperone</keyword>
<keyword id="KW-0963">Cytoplasm</keyword>
<keyword id="KW-0547">Nucleotide-binding</keyword>
<sequence length="173" mass="19056">FMCDEMERSVHDALCVVKRVLESKSVVPGGGAVEAALSIYLENYATSMGSREQLAIAEFARSLLVIPKTLAVNRAQDSTDLVAKLRAFHNEAQVNPDRKNLKWIGLDLVNGKARDNKQAGVFEPTMVKTKSLKFATEAAITILRIDDLIKLYPESNDKGQSYQDAVRSGSLEN</sequence>
<dbReference type="EMBL" id="S77330">
    <property type="protein sequence ID" value="AAB34658.2"/>
    <property type="molecule type" value="mRNA"/>
</dbReference>
<dbReference type="PIR" id="S52132">
    <property type="entry name" value="S52132"/>
</dbReference>
<dbReference type="SMR" id="P50157"/>
<dbReference type="GO" id="GO:0005829">
    <property type="term" value="C:cytosol"/>
    <property type="evidence" value="ECO:0007669"/>
    <property type="project" value="UniProtKB-SubCell"/>
</dbReference>
<dbReference type="GO" id="GO:0005524">
    <property type="term" value="F:ATP binding"/>
    <property type="evidence" value="ECO:0007669"/>
    <property type="project" value="UniProtKB-KW"/>
</dbReference>
<dbReference type="GO" id="GO:0140662">
    <property type="term" value="F:ATP-dependent protein folding chaperone"/>
    <property type="evidence" value="ECO:0007669"/>
    <property type="project" value="InterPro"/>
</dbReference>
<dbReference type="Gene3D" id="1.10.560.10">
    <property type="entry name" value="GroEL-like equatorial domain"/>
    <property type="match status" value="1"/>
</dbReference>
<dbReference type="Gene3D" id="3.30.260.10">
    <property type="entry name" value="TCP-1-like chaperonin intermediate domain"/>
    <property type="match status" value="1"/>
</dbReference>
<dbReference type="InterPro" id="IPR017998">
    <property type="entry name" value="Chaperone_TCP-1"/>
</dbReference>
<dbReference type="InterPro" id="IPR002423">
    <property type="entry name" value="Cpn60/GroEL/TCP-1"/>
</dbReference>
<dbReference type="InterPro" id="IPR027413">
    <property type="entry name" value="GROEL-like_equatorial_sf"/>
</dbReference>
<dbReference type="InterPro" id="IPR027410">
    <property type="entry name" value="TCP-1-like_intermed_sf"/>
</dbReference>
<dbReference type="PANTHER" id="PTHR11353">
    <property type="entry name" value="CHAPERONIN"/>
    <property type="match status" value="1"/>
</dbReference>
<dbReference type="Pfam" id="PF00118">
    <property type="entry name" value="Cpn60_TCP1"/>
    <property type="match status" value="1"/>
</dbReference>
<dbReference type="SUPFAM" id="SSF48592">
    <property type="entry name" value="GroEL equatorial domain-like"/>
    <property type="match status" value="1"/>
</dbReference>
<reference key="1">
    <citation type="journal article" date="1995" name="Biochim. Biophys. Acta">
        <title>Expression of the axolotl homologue of mouse chaperonin T-complex protein-1 during early development.</title>
        <authorList>
            <person name="Sun H.B."/>
            <person name="Neff A.W."/>
            <person name="Mescher A.L."/>
            <person name="Malacinski G.M."/>
        </authorList>
    </citation>
    <scope>NUCLEOTIDE SEQUENCE [MRNA]</scope>
</reference>
<protein>
    <recommendedName>
        <fullName>T-complex protein 1 subunit alpha</fullName>
        <shortName>TCP-1-alpha</shortName>
    </recommendedName>
    <alternativeName>
        <fullName>CCT-alpha</fullName>
    </alternativeName>
</protein>
<organism>
    <name type="scientific">Ambystoma mexicanum</name>
    <name type="common">Axolotl</name>
    <dbReference type="NCBI Taxonomy" id="8296"/>
    <lineage>
        <taxon>Eukaryota</taxon>
        <taxon>Metazoa</taxon>
        <taxon>Chordata</taxon>
        <taxon>Craniata</taxon>
        <taxon>Vertebrata</taxon>
        <taxon>Euteleostomi</taxon>
        <taxon>Amphibia</taxon>
        <taxon>Batrachia</taxon>
        <taxon>Caudata</taxon>
        <taxon>Salamandroidea</taxon>
        <taxon>Ambystomatidae</taxon>
        <taxon>Ambystoma</taxon>
    </lineage>
</organism>
<proteinExistence type="evidence at transcript level"/>